<feature type="chain" id="PRO_1000069808" description="4-hydroxybenzoate octaprenyltransferase">
    <location>
        <begin position="1"/>
        <end position="287"/>
    </location>
</feature>
<feature type="transmembrane region" description="Helical" evidence="1">
    <location>
        <begin position="41"/>
        <end position="61"/>
    </location>
</feature>
<feature type="transmembrane region" description="Helical" evidence="1">
    <location>
        <begin position="89"/>
        <end position="109"/>
    </location>
</feature>
<feature type="transmembrane region" description="Helical" evidence="1">
    <location>
        <begin position="133"/>
        <end position="153"/>
    </location>
</feature>
<feature type="transmembrane region" description="Helical" evidence="1">
    <location>
        <begin position="158"/>
        <end position="178"/>
    </location>
</feature>
<feature type="transmembrane region" description="Helical" evidence="1">
    <location>
        <begin position="202"/>
        <end position="224"/>
    </location>
</feature>
<feature type="transmembrane region" description="Helical" evidence="1">
    <location>
        <begin position="266"/>
        <end position="286"/>
    </location>
</feature>
<keyword id="KW-0997">Cell inner membrane</keyword>
<keyword id="KW-1003">Cell membrane</keyword>
<keyword id="KW-0460">Magnesium</keyword>
<keyword id="KW-0472">Membrane</keyword>
<keyword id="KW-0808">Transferase</keyword>
<keyword id="KW-0812">Transmembrane</keyword>
<keyword id="KW-1133">Transmembrane helix</keyword>
<keyword id="KW-0831">Ubiquinone biosynthesis</keyword>
<sequence length="287" mass="31885">MLARFPLYLRLVRMDKPIGSLLLLWPTLNALWIASDGRPRWPLLVIFTLGTLLMRSAGCAMNDYADRDFDRHVKRTADRPLTSGKIRAWEAVAIAVGLSFIAFLLILPLNTLTKELSVVALFVAGSYPFMKRFFAIPQAYLGIAFGFGIPMAFAAVQDTVPMLAWVMLVANIFWSVAYDTEYAMVDRDDDIKIGIRTSALTFGRFDVAAVMACYAATLGIYVWIGVTLGFGLAYWVGWAAAVGCALYHYTLIKDRERMPCFAAFRHNNWLGGVLFAGIAAHYLLAGN</sequence>
<name>UBIA_BURCH</name>
<gene>
    <name evidence="1" type="primary">ubiA</name>
    <name type="ordered locus">Bcen2424_0729</name>
</gene>
<dbReference type="EC" id="2.5.1.39" evidence="1"/>
<dbReference type="EMBL" id="CP000458">
    <property type="protein sequence ID" value="ABK07482.1"/>
    <property type="molecule type" value="Genomic_DNA"/>
</dbReference>
<dbReference type="RefSeq" id="WP_011544625.1">
    <property type="nucleotide sequence ID" value="NC_008542.1"/>
</dbReference>
<dbReference type="SMR" id="A0K4Q5"/>
<dbReference type="KEGG" id="bch:Bcen2424_0729"/>
<dbReference type="HOGENOM" id="CLU_034879_1_0_4"/>
<dbReference type="UniPathway" id="UPA00232"/>
<dbReference type="GO" id="GO:0005886">
    <property type="term" value="C:plasma membrane"/>
    <property type="evidence" value="ECO:0007669"/>
    <property type="project" value="UniProtKB-SubCell"/>
</dbReference>
<dbReference type="GO" id="GO:0008412">
    <property type="term" value="F:4-hydroxybenzoate polyprenyltransferase activity"/>
    <property type="evidence" value="ECO:0007669"/>
    <property type="project" value="UniProtKB-UniRule"/>
</dbReference>
<dbReference type="GO" id="GO:0006744">
    <property type="term" value="P:ubiquinone biosynthetic process"/>
    <property type="evidence" value="ECO:0007669"/>
    <property type="project" value="UniProtKB-UniRule"/>
</dbReference>
<dbReference type="CDD" id="cd13959">
    <property type="entry name" value="PT_UbiA_COQ2"/>
    <property type="match status" value="1"/>
</dbReference>
<dbReference type="FunFam" id="1.10.357.140:FF:000002">
    <property type="entry name" value="4-hydroxybenzoate octaprenyltransferase"/>
    <property type="match status" value="1"/>
</dbReference>
<dbReference type="FunFam" id="1.20.120.1780:FF:000001">
    <property type="entry name" value="4-hydroxybenzoate octaprenyltransferase"/>
    <property type="match status" value="1"/>
</dbReference>
<dbReference type="Gene3D" id="1.10.357.140">
    <property type="entry name" value="UbiA prenyltransferase"/>
    <property type="match status" value="1"/>
</dbReference>
<dbReference type="Gene3D" id="1.20.120.1780">
    <property type="entry name" value="UbiA prenyltransferase"/>
    <property type="match status" value="1"/>
</dbReference>
<dbReference type="HAMAP" id="MF_01635">
    <property type="entry name" value="UbiA"/>
    <property type="match status" value="1"/>
</dbReference>
<dbReference type="InterPro" id="IPR006370">
    <property type="entry name" value="HB_polyprenyltransferase-like"/>
</dbReference>
<dbReference type="InterPro" id="IPR039653">
    <property type="entry name" value="Prenyltransferase"/>
</dbReference>
<dbReference type="InterPro" id="IPR000537">
    <property type="entry name" value="UbiA_prenyltransferase"/>
</dbReference>
<dbReference type="InterPro" id="IPR030470">
    <property type="entry name" value="UbiA_prenylTrfase_CS"/>
</dbReference>
<dbReference type="InterPro" id="IPR044878">
    <property type="entry name" value="UbiA_sf"/>
</dbReference>
<dbReference type="NCBIfam" id="TIGR01474">
    <property type="entry name" value="ubiA_proteo"/>
    <property type="match status" value="1"/>
</dbReference>
<dbReference type="PANTHER" id="PTHR11048:SF28">
    <property type="entry name" value="4-HYDROXYBENZOATE POLYPRENYLTRANSFERASE, MITOCHONDRIAL"/>
    <property type="match status" value="1"/>
</dbReference>
<dbReference type="PANTHER" id="PTHR11048">
    <property type="entry name" value="PRENYLTRANSFERASES"/>
    <property type="match status" value="1"/>
</dbReference>
<dbReference type="Pfam" id="PF01040">
    <property type="entry name" value="UbiA"/>
    <property type="match status" value="1"/>
</dbReference>
<dbReference type="PROSITE" id="PS00943">
    <property type="entry name" value="UBIA"/>
    <property type="match status" value="1"/>
</dbReference>
<protein>
    <recommendedName>
        <fullName evidence="1">4-hydroxybenzoate octaprenyltransferase</fullName>
        <ecNumber evidence="1">2.5.1.39</ecNumber>
    </recommendedName>
    <alternativeName>
        <fullName evidence="1">4-HB polyprenyltransferase</fullName>
    </alternativeName>
</protein>
<reference key="1">
    <citation type="submission" date="2006-08" db="EMBL/GenBank/DDBJ databases">
        <title>Complete sequence of chromosome 1 of Burkholderia cenocepacia HI2424.</title>
        <authorList>
            <person name="Copeland A."/>
            <person name="Lucas S."/>
            <person name="Lapidus A."/>
            <person name="Barry K."/>
            <person name="Detter J.C."/>
            <person name="Glavina del Rio T."/>
            <person name="Hammon N."/>
            <person name="Israni S."/>
            <person name="Pitluck S."/>
            <person name="Chain P."/>
            <person name="Malfatti S."/>
            <person name="Shin M."/>
            <person name="Vergez L."/>
            <person name="Schmutz J."/>
            <person name="Larimer F."/>
            <person name="Land M."/>
            <person name="Hauser L."/>
            <person name="Kyrpides N."/>
            <person name="Kim E."/>
            <person name="LiPuma J.J."/>
            <person name="Gonzalez C.F."/>
            <person name="Konstantinidis K."/>
            <person name="Tiedje J.M."/>
            <person name="Richardson P."/>
        </authorList>
    </citation>
    <scope>NUCLEOTIDE SEQUENCE [LARGE SCALE GENOMIC DNA]</scope>
    <source>
        <strain>HI2424</strain>
    </source>
</reference>
<comment type="function">
    <text evidence="1">Catalyzes the prenylation of para-hydroxybenzoate (PHB) with an all-trans polyprenyl group. Mediates the second step in the final reaction sequence of ubiquinone-8 (UQ-8) biosynthesis, which is the condensation of the polyisoprenoid side chain with PHB, generating the first membrane-bound Q intermediate 3-octaprenyl-4-hydroxybenzoate.</text>
</comment>
<comment type="catalytic activity">
    <reaction evidence="1">
        <text>all-trans-octaprenyl diphosphate + 4-hydroxybenzoate = 4-hydroxy-3-(all-trans-octaprenyl)benzoate + diphosphate</text>
        <dbReference type="Rhea" id="RHEA:27782"/>
        <dbReference type="ChEBI" id="CHEBI:1617"/>
        <dbReference type="ChEBI" id="CHEBI:17879"/>
        <dbReference type="ChEBI" id="CHEBI:33019"/>
        <dbReference type="ChEBI" id="CHEBI:57711"/>
        <dbReference type="EC" id="2.5.1.39"/>
    </reaction>
</comment>
<comment type="cofactor">
    <cofactor evidence="1">
        <name>Mg(2+)</name>
        <dbReference type="ChEBI" id="CHEBI:18420"/>
    </cofactor>
</comment>
<comment type="pathway">
    <text evidence="1">Cofactor biosynthesis; ubiquinone biosynthesis.</text>
</comment>
<comment type="subcellular location">
    <subcellularLocation>
        <location evidence="1">Cell inner membrane</location>
        <topology evidence="1">Multi-pass membrane protein</topology>
    </subcellularLocation>
</comment>
<comment type="similarity">
    <text evidence="1">Belongs to the UbiA prenyltransferase family.</text>
</comment>
<proteinExistence type="inferred from homology"/>
<accession>A0K4Q5</accession>
<organism>
    <name type="scientific">Burkholderia cenocepacia (strain HI2424)</name>
    <dbReference type="NCBI Taxonomy" id="331272"/>
    <lineage>
        <taxon>Bacteria</taxon>
        <taxon>Pseudomonadati</taxon>
        <taxon>Pseudomonadota</taxon>
        <taxon>Betaproteobacteria</taxon>
        <taxon>Burkholderiales</taxon>
        <taxon>Burkholderiaceae</taxon>
        <taxon>Burkholderia</taxon>
        <taxon>Burkholderia cepacia complex</taxon>
    </lineage>
</organism>
<evidence type="ECO:0000255" key="1">
    <source>
        <dbReference type="HAMAP-Rule" id="MF_01635"/>
    </source>
</evidence>